<comment type="tissue specificity">
    <text evidence="3">Expressed in the hair root in the hair shaft cuticle and cortex.</text>
</comment>
<comment type="miscellaneous">
    <text evidence="5">There are two types of hair/microfibrillar keratin, I (acidic) and II (neutral to basic).</text>
</comment>
<comment type="similarity">
    <text evidence="2">Belongs to the intermediate filament family.</text>
</comment>
<proteinExistence type="evidence at transcript level"/>
<feature type="chain" id="PRO_0000361023" description="Keratin, type I cuticular Ha4">
    <location>
        <begin position="1"/>
        <end position="392"/>
    </location>
</feature>
<feature type="domain" description="IF rod" evidence="2">
    <location>
        <begin position="56"/>
        <end position="367"/>
    </location>
</feature>
<feature type="region of interest" description="Head">
    <location>
        <begin position="1"/>
        <end position="56"/>
    </location>
</feature>
<feature type="region of interest" description="Coil 1A">
    <location>
        <begin position="57"/>
        <end position="91"/>
    </location>
</feature>
<feature type="region of interest" description="Linker 1">
    <location>
        <begin position="92"/>
        <end position="102"/>
    </location>
</feature>
<feature type="region of interest" description="Coil 1B">
    <location>
        <begin position="103"/>
        <end position="203"/>
    </location>
</feature>
<feature type="region of interest" description="Linker 12">
    <location>
        <begin position="204"/>
        <end position="219"/>
    </location>
</feature>
<feature type="region of interest" description="Coil 2">
    <location>
        <begin position="220"/>
        <end position="363"/>
    </location>
</feature>
<feature type="region of interest" description="Tail">
    <location>
        <begin position="364"/>
        <end position="392"/>
    </location>
</feature>
<feature type="site" description="Stutter">
    <location>
        <position position="275"/>
    </location>
</feature>
<evidence type="ECO:0000250" key="1">
    <source>
        <dbReference type="UniProtKB" id="O76011"/>
    </source>
</evidence>
<evidence type="ECO:0000255" key="2">
    <source>
        <dbReference type="PROSITE-ProRule" id="PRU01188"/>
    </source>
</evidence>
<evidence type="ECO:0000269" key="3">
    <source>
    </source>
</evidence>
<evidence type="ECO:0000303" key="4">
    <source>
    </source>
</evidence>
<evidence type="ECO:0000305" key="5"/>
<evidence type="ECO:0000312" key="6">
    <source>
        <dbReference type="EMBL" id="AAI25421.1"/>
    </source>
</evidence>
<evidence type="ECO:0000312" key="7">
    <source>
        <dbReference type="EMBL" id="BAB29474.1"/>
    </source>
</evidence>
<evidence type="ECO:0000312" key="8">
    <source>
        <dbReference type="EMBL" id="CAM22480.1"/>
    </source>
</evidence>
<evidence type="ECO:0000312" key="9">
    <source>
        <dbReference type="MGI" id="MGI:1309994"/>
    </source>
</evidence>
<evidence type="ECO:0000312" key="10">
    <source>
        <dbReference type="PIR" id="A60777"/>
    </source>
</evidence>
<protein>
    <recommendedName>
        <fullName evidence="1">Keratin, type I cuticular Ha4</fullName>
    </recommendedName>
    <alternativeName>
        <fullName>Hair keratin, type I Ha4</fullName>
    </alternativeName>
    <alternativeName>
        <fullName evidence="1 8">Keratin-34</fullName>
        <shortName>K34</shortName>
    </alternativeName>
</protein>
<organism>
    <name type="scientific">Mus musculus</name>
    <name type="common">Mouse</name>
    <dbReference type="NCBI Taxonomy" id="10090"/>
    <lineage>
        <taxon>Eukaryota</taxon>
        <taxon>Metazoa</taxon>
        <taxon>Chordata</taxon>
        <taxon>Craniata</taxon>
        <taxon>Vertebrata</taxon>
        <taxon>Euteleostomi</taxon>
        <taxon>Mammalia</taxon>
        <taxon>Eutheria</taxon>
        <taxon>Euarchontoglires</taxon>
        <taxon>Glires</taxon>
        <taxon>Rodentia</taxon>
        <taxon>Myomorpha</taxon>
        <taxon>Muroidea</taxon>
        <taxon>Muridae</taxon>
        <taxon>Murinae</taxon>
        <taxon>Mus</taxon>
        <taxon>Mus</taxon>
    </lineage>
</organism>
<accession>Q9D646</accession>
<sequence length="392" mass="44560">MSCESCLPALSCRTSCSSRPCVPPSCHGCTLPGACNIPANVGNCNWFCEGSFNGNEKETMQFLNDRLASYMEKVRQLERENAELECRIQERNQQQDPLVCPAYQAYFRTIEELQQKILCAKSENARLVVQIDNAKLASDDFRTKYQTELSMRQLVEADINSLRRILDELTLCKSDLEAQVESLREELLCLKKNHEEEVNTLRCQLGDRLNVEVDAAPTVDLNRVLNETRCQYEALVETNRREVEEWFTTQSEELNKQVVSSSEQLQSCQAEIIELRRTVNALEIELQAQHCMRNSLENTLTESEARYSSQLSQVQCLITNVESQLGEIRADLERQNQEYQVLLDVRARLECEINTYRSLLESEDCNLPCNPCATTNASGSCCGPCGSSKRCC</sequence>
<gene>
    <name evidence="9" type="primary">Krt34</name>
    <name evidence="4" type="synonym">Ha4</name>
    <name evidence="9" type="synonym">Krt1-4</name>
</gene>
<keyword id="KW-0175">Coiled coil</keyword>
<keyword id="KW-0403">Intermediate filament</keyword>
<keyword id="KW-0416">Keratin</keyword>
<keyword id="KW-1185">Reference proteome</keyword>
<name>KRT34_MOUSE</name>
<reference evidence="5 10" key="1">
    <citation type="journal article" date="1990" name="J. Invest. Dermatol.">
        <title>Differential expression of type I hair keratins.</title>
        <authorList>
            <person name="Bertolino A.P."/>
            <person name="Checkla D.M."/>
            <person name="Heitner S."/>
            <person name="Freedberg I.M."/>
            <person name="Yu D.W."/>
        </authorList>
    </citation>
    <scope>NUCLEOTIDE SEQUENCE [MRNA]</scope>
    <scope>TISSUE SPECIFICITY</scope>
    <source>
        <tissue evidence="3">Hair</tissue>
    </source>
</reference>
<reference evidence="7" key="2">
    <citation type="journal article" date="2005" name="Science">
        <title>The transcriptional landscape of the mammalian genome.</title>
        <authorList>
            <person name="Carninci P."/>
            <person name="Kasukawa T."/>
            <person name="Katayama S."/>
            <person name="Gough J."/>
            <person name="Frith M.C."/>
            <person name="Maeda N."/>
            <person name="Oyama R."/>
            <person name="Ravasi T."/>
            <person name="Lenhard B."/>
            <person name="Wells C."/>
            <person name="Kodzius R."/>
            <person name="Shimokawa K."/>
            <person name="Bajic V.B."/>
            <person name="Brenner S.E."/>
            <person name="Batalov S."/>
            <person name="Forrest A.R."/>
            <person name="Zavolan M."/>
            <person name="Davis M.J."/>
            <person name="Wilming L.G."/>
            <person name="Aidinis V."/>
            <person name="Allen J.E."/>
            <person name="Ambesi-Impiombato A."/>
            <person name="Apweiler R."/>
            <person name="Aturaliya R.N."/>
            <person name="Bailey T.L."/>
            <person name="Bansal M."/>
            <person name="Baxter L."/>
            <person name="Beisel K.W."/>
            <person name="Bersano T."/>
            <person name="Bono H."/>
            <person name="Chalk A.M."/>
            <person name="Chiu K.P."/>
            <person name="Choudhary V."/>
            <person name="Christoffels A."/>
            <person name="Clutterbuck D.R."/>
            <person name="Crowe M.L."/>
            <person name="Dalla E."/>
            <person name="Dalrymple B.P."/>
            <person name="de Bono B."/>
            <person name="Della Gatta G."/>
            <person name="di Bernardo D."/>
            <person name="Down T."/>
            <person name="Engstrom P."/>
            <person name="Fagiolini M."/>
            <person name="Faulkner G."/>
            <person name="Fletcher C.F."/>
            <person name="Fukushima T."/>
            <person name="Furuno M."/>
            <person name="Futaki S."/>
            <person name="Gariboldi M."/>
            <person name="Georgii-Hemming P."/>
            <person name="Gingeras T.R."/>
            <person name="Gojobori T."/>
            <person name="Green R.E."/>
            <person name="Gustincich S."/>
            <person name="Harbers M."/>
            <person name="Hayashi Y."/>
            <person name="Hensch T.K."/>
            <person name="Hirokawa N."/>
            <person name="Hill D."/>
            <person name="Huminiecki L."/>
            <person name="Iacono M."/>
            <person name="Ikeo K."/>
            <person name="Iwama A."/>
            <person name="Ishikawa T."/>
            <person name="Jakt M."/>
            <person name="Kanapin A."/>
            <person name="Katoh M."/>
            <person name="Kawasawa Y."/>
            <person name="Kelso J."/>
            <person name="Kitamura H."/>
            <person name="Kitano H."/>
            <person name="Kollias G."/>
            <person name="Krishnan S.P."/>
            <person name="Kruger A."/>
            <person name="Kummerfeld S.K."/>
            <person name="Kurochkin I.V."/>
            <person name="Lareau L.F."/>
            <person name="Lazarevic D."/>
            <person name="Lipovich L."/>
            <person name="Liu J."/>
            <person name="Liuni S."/>
            <person name="McWilliam S."/>
            <person name="Madan Babu M."/>
            <person name="Madera M."/>
            <person name="Marchionni L."/>
            <person name="Matsuda H."/>
            <person name="Matsuzawa S."/>
            <person name="Miki H."/>
            <person name="Mignone F."/>
            <person name="Miyake S."/>
            <person name="Morris K."/>
            <person name="Mottagui-Tabar S."/>
            <person name="Mulder N."/>
            <person name="Nakano N."/>
            <person name="Nakauchi H."/>
            <person name="Ng P."/>
            <person name="Nilsson R."/>
            <person name="Nishiguchi S."/>
            <person name="Nishikawa S."/>
            <person name="Nori F."/>
            <person name="Ohara O."/>
            <person name="Okazaki Y."/>
            <person name="Orlando V."/>
            <person name="Pang K.C."/>
            <person name="Pavan W.J."/>
            <person name="Pavesi G."/>
            <person name="Pesole G."/>
            <person name="Petrovsky N."/>
            <person name="Piazza S."/>
            <person name="Reed J."/>
            <person name="Reid J.F."/>
            <person name="Ring B.Z."/>
            <person name="Ringwald M."/>
            <person name="Rost B."/>
            <person name="Ruan Y."/>
            <person name="Salzberg S.L."/>
            <person name="Sandelin A."/>
            <person name="Schneider C."/>
            <person name="Schoenbach C."/>
            <person name="Sekiguchi K."/>
            <person name="Semple C.A."/>
            <person name="Seno S."/>
            <person name="Sessa L."/>
            <person name="Sheng Y."/>
            <person name="Shibata Y."/>
            <person name="Shimada H."/>
            <person name="Shimada K."/>
            <person name="Silva D."/>
            <person name="Sinclair B."/>
            <person name="Sperling S."/>
            <person name="Stupka E."/>
            <person name="Sugiura K."/>
            <person name="Sultana R."/>
            <person name="Takenaka Y."/>
            <person name="Taki K."/>
            <person name="Tammoja K."/>
            <person name="Tan S.L."/>
            <person name="Tang S."/>
            <person name="Taylor M.S."/>
            <person name="Tegner J."/>
            <person name="Teichmann S.A."/>
            <person name="Ueda H.R."/>
            <person name="van Nimwegen E."/>
            <person name="Verardo R."/>
            <person name="Wei C.L."/>
            <person name="Yagi K."/>
            <person name="Yamanishi H."/>
            <person name="Zabarovsky E."/>
            <person name="Zhu S."/>
            <person name="Zimmer A."/>
            <person name="Hide W."/>
            <person name="Bult C."/>
            <person name="Grimmond S.M."/>
            <person name="Teasdale R.D."/>
            <person name="Liu E.T."/>
            <person name="Brusic V."/>
            <person name="Quackenbush J."/>
            <person name="Wahlestedt C."/>
            <person name="Mattick J.S."/>
            <person name="Hume D.A."/>
            <person name="Kai C."/>
            <person name="Sasaki D."/>
            <person name="Tomaru Y."/>
            <person name="Fukuda S."/>
            <person name="Kanamori-Katayama M."/>
            <person name="Suzuki M."/>
            <person name="Aoki J."/>
            <person name="Arakawa T."/>
            <person name="Iida J."/>
            <person name="Imamura K."/>
            <person name="Itoh M."/>
            <person name="Kato T."/>
            <person name="Kawaji H."/>
            <person name="Kawagashira N."/>
            <person name="Kawashima T."/>
            <person name="Kojima M."/>
            <person name="Kondo S."/>
            <person name="Konno H."/>
            <person name="Nakano K."/>
            <person name="Ninomiya N."/>
            <person name="Nishio T."/>
            <person name="Okada M."/>
            <person name="Plessy C."/>
            <person name="Shibata K."/>
            <person name="Shiraki T."/>
            <person name="Suzuki S."/>
            <person name="Tagami M."/>
            <person name="Waki K."/>
            <person name="Watahiki A."/>
            <person name="Okamura-Oho Y."/>
            <person name="Suzuki H."/>
            <person name="Kawai J."/>
            <person name="Hayashizaki Y."/>
        </authorList>
    </citation>
    <scope>NUCLEOTIDE SEQUENCE [LARGE SCALE MRNA]</scope>
    <source>
        <strain evidence="7">C57BL/6J</strain>
        <tissue evidence="7">Neonatal skin</tissue>
    </source>
</reference>
<reference key="3">
    <citation type="journal article" date="2009" name="PLoS Biol.">
        <title>Lineage-specific biology revealed by a finished genome assembly of the mouse.</title>
        <authorList>
            <person name="Church D.M."/>
            <person name="Goodstadt L."/>
            <person name="Hillier L.W."/>
            <person name="Zody M.C."/>
            <person name="Goldstein S."/>
            <person name="She X."/>
            <person name="Bult C.J."/>
            <person name="Agarwala R."/>
            <person name="Cherry J.L."/>
            <person name="DiCuccio M."/>
            <person name="Hlavina W."/>
            <person name="Kapustin Y."/>
            <person name="Meric P."/>
            <person name="Maglott D."/>
            <person name="Birtle Z."/>
            <person name="Marques A.C."/>
            <person name="Graves T."/>
            <person name="Zhou S."/>
            <person name="Teague B."/>
            <person name="Potamousis K."/>
            <person name="Churas C."/>
            <person name="Place M."/>
            <person name="Herschleb J."/>
            <person name="Runnheim R."/>
            <person name="Forrest D."/>
            <person name="Amos-Landgraf J."/>
            <person name="Schwartz D.C."/>
            <person name="Cheng Z."/>
            <person name="Lindblad-Toh K."/>
            <person name="Eichler E.E."/>
            <person name="Ponting C.P."/>
        </authorList>
    </citation>
    <scope>NUCLEOTIDE SEQUENCE [LARGE SCALE GENOMIC DNA]</scope>
    <source>
        <strain>C57BL/6J</strain>
    </source>
</reference>
<reference evidence="8" key="4">
    <citation type="submission" date="2005-09" db="EMBL/GenBank/DDBJ databases">
        <authorList>
            <person name="Mural R.J."/>
            <person name="Adams M.D."/>
            <person name="Myers E.W."/>
            <person name="Smith H.O."/>
            <person name="Venter J.C."/>
        </authorList>
    </citation>
    <scope>NUCLEOTIDE SEQUENCE [LARGE SCALE GENOMIC DNA]</scope>
</reference>
<reference evidence="5 6" key="5">
    <citation type="journal article" date="2004" name="Genome Res.">
        <title>The status, quality, and expansion of the NIH full-length cDNA project: the Mammalian Gene Collection (MGC).</title>
        <authorList>
            <consortium name="The MGC Project Team"/>
        </authorList>
    </citation>
    <scope>NUCLEOTIDE SEQUENCE [LARGE SCALE MRNA]</scope>
</reference>
<dbReference type="EMBL" id="AK014631">
    <property type="protein sequence ID" value="BAB29474.1"/>
    <property type="molecule type" value="mRNA"/>
</dbReference>
<dbReference type="EMBL" id="AL592545">
    <property type="protein sequence ID" value="CAM22480.1"/>
    <property type="molecule type" value="Genomic_DNA"/>
</dbReference>
<dbReference type="EMBL" id="CH466662">
    <property type="protein sequence ID" value="EDL02589.1"/>
    <property type="molecule type" value="Genomic_DNA"/>
</dbReference>
<dbReference type="EMBL" id="BC125420">
    <property type="protein sequence ID" value="AAI25421.1"/>
    <property type="molecule type" value="mRNA"/>
</dbReference>
<dbReference type="EMBL" id="BC125446">
    <property type="protein sequence ID" value="AAI25447.1"/>
    <property type="molecule type" value="mRNA"/>
</dbReference>
<dbReference type="CCDS" id="CCDS25404.1"/>
<dbReference type="PIR" id="A60777">
    <property type="entry name" value="A60777"/>
</dbReference>
<dbReference type="RefSeq" id="NP_081839.1">
    <property type="nucleotide sequence ID" value="NM_027563.4"/>
</dbReference>
<dbReference type="SMR" id="Q9D646"/>
<dbReference type="DIP" id="DIP-303N"/>
<dbReference type="FunCoup" id="Q9D646">
    <property type="interactions" value="146"/>
</dbReference>
<dbReference type="STRING" id="10090.ENSMUSP00000056622"/>
<dbReference type="PhosphoSitePlus" id="Q9D646"/>
<dbReference type="jPOST" id="Q9D646"/>
<dbReference type="PaxDb" id="10090-ENSMUSP00000056622"/>
<dbReference type="PeptideAtlas" id="Q9D646"/>
<dbReference type="ProteomicsDB" id="264870"/>
<dbReference type="Antibodypedia" id="28834">
    <property type="antibodies" value="111 antibodies from 26 providers"/>
</dbReference>
<dbReference type="DNASU" id="16672"/>
<dbReference type="Ensembl" id="ENSMUST00000056362.3">
    <property type="protein sequence ID" value="ENSMUSP00000056622.3"/>
    <property type="gene ID" value="ENSMUSG00000043485.3"/>
</dbReference>
<dbReference type="GeneID" id="16672"/>
<dbReference type="KEGG" id="mmu:16672"/>
<dbReference type="UCSC" id="uc007lkc.1">
    <property type="organism name" value="mouse"/>
</dbReference>
<dbReference type="AGR" id="MGI:1309994"/>
<dbReference type="CTD" id="3885"/>
<dbReference type="MGI" id="MGI:1309994">
    <property type="gene designation" value="Krt34"/>
</dbReference>
<dbReference type="VEuPathDB" id="HostDB:ENSMUSG00000043485"/>
<dbReference type="eggNOG" id="ENOG502RTXS">
    <property type="taxonomic scope" value="Eukaryota"/>
</dbReference>
<dbReference type="GeneTree" id="ENSGT00940000163426"/>
<dbReference type="HOGENOM" id="CLU_012560_8_0_1"/>
<dbReference type="InParanoid" id="Q9D646"/>
<dbReference type="OMA" id="HHIHLYR"/>
<dbReference type="OrthoDB" id="2441647at2759"/>
<dbReference type="PhylomeDB" id="Q9D646"/>
<dbReference type="TreeFam" id="TF332742"/>
<dbReference type="Reactome" id="R-MMU-6805567">
    <property type="pathway name" value="Keratinization"/>
</dbReference>
<dbReference type="Reactome" id="R-MMU-6809371">
    <property type="pathway name" value="Formation of the cornified envelope"/>
</dbReference>
<dbReference type="BioGRID-ORCS" id="16672">
    <property type="hits" value="3 hits in 76 CRISPR screens"/>
</dbReference>
<dbReference type="ChiTaRS" id="Krt33b">
    <property type="organism name" value="mouse"/>
</dbReference>
<dbReference type="PRO" id="PR:Q9D646"/>
<dbReference type="Proteomes" id="UP000000589">
    <property type="component" value="Chromosome 11"/>
</dbReference>
<dbReference type="RNAct" id="Q9D646">
    <property type="molecule type" value="protein"/>
</dbReference>
<dbReference type="Bgee" id="ENSMUSG00000043485">
    <property type="expression patterns" value="Expressed in lip and 13 other cell types or tissues"/>
</dbReference>
<dbReference type="GO" id="GO:0005882">
    <property type="term" value="C:intermediate filament"/>
    <property type="evidence" value="ECO:0007669"/>
    <property type="project" value="UniProtKB-KW"/>
</dbReference>
<dbReference type="GO" id="GO:0005198">
    <property type="term" value="F:structural molecule activity"/>
    <property type="evidence" value="ECO:0007669"/>
    <property type="project" value="InterPro"/>
</dbReference>
<dbReference type="FunFam" id="1.20.5.1160:FF:000002">
    <property type="entry name" value="Type I keratin 10"/>
    <property type="match status" value="1"/>
</dbReference>
<dbReference type="FunFam" id="1.20.5.170:FF:000002">
    <property type="entry name" value="Type I keratin KA11"/>
    <property type="match status" value="1"/>
</dbReference>
<dbReference type="FunFam" id="1.20.5.500:FF:000001">
    <property type="entry name" value="Type II keratin 23"/>
    <property type="match status" value="1"/>
</dbReference>
<dbReference type="Gene3D" id="1.20.5.170">
    <property type="match status" value="1"/>
</dbReference>
<dbReference type="Gene3D" id="1.20.5.500">
    <property type="entry name" value="Single helix bin"/>
    <property type="match status" value="1"/>
</dbReference>
<dbReference type="Gene3D" id="1.20.5.1160">
    <property type="entry name" value="Vasodilator-stimulated phosphoprotein"/>
    <property type="match status" value="1"/>
</dbReference>
<dbReference type="InterPro" id="IPR018039">
    <property type="entry name" value="IF_conserved"/>
</dbReference>
<dbReference type="InterPro" id="IPR039008">
    <property type="entry name" value="IF_rod_dom"/>
</dbReference>
<dbReference type="InterPro" id="IPR002957">
    <property type="entry name" value="Keratin_I"/>
</dbReference>
<dbReference type="PANTHER" id="PTHR23239">
    <property type="entry name" value="INTERMEDIATE FILAMENT"/>
    <property type="match status" value="1"/>
</dbReference>
<dbReference type="PANTHER" id="PTHR23239:SF373">
    <property type="entry name" value="KERATIN, TYPE I CUTICULAR HA4"/>
    <property type="match status" value="1"/>
</dbReference>
<dbReference type="Pfam" id="PF00038">
    <property type="entry name" value="Filament"/>
    <property type="match status" value="1"/>
</dbReference>
<dbReference type="PRINTS" id="PR01248">
    <property type="entry name" value="TYPE1KERATIN"/>
</dbReference>
<dbReference type="SMART" id="SM01391">
    <property type="entry name" value="Filament"/>
    <property type="match status" value="1"/>
</dbReference>
<dbReference type="SUPFAM" id="SSF64593">
    <property type="entry name" value="Intermediate filament protein, coiled coil region"/>
    <property type="match status" value="2"/>
</dbReference>
<dbReference type="PROSITE" id="PS00226">
    <property type="entry name" value="IF_ROD_1"/>
    <property type="match status" value="1"/>
</dbReference>
<dbReference type="PROSITE" id="PS51842">
    <property type="entry name" value="IF_ROD_2"/>
    <property type="match status" value="1"/>
</dbReference>